<comment type="function">
    <text evidence="1">Dual-specificity methyltransferase that catalyzes the formation of 5-methyluridine at position 54 (m5U54) in all tRNAs, and that of position 341 (m5U341) in tmRNA (transfer-mRNA).</text>
</comment>
<comment type="catalytic activity">
    <reaction evidence="1">
        <text>uridine(54) in tRNA + S-adenosyl-L-methionine = 5-methyluridine(54) in tRNA + S-adenosyl-L-homocysteine + H(+)</text>
        <dbReference type="Rhea" id="RHEA:42712"/>
        <dbReference type="Rhea" id="RHEA-COMP:10167"/>
        <dbReference type="Rhea" id="RHEA-COMP:10193"/>
        <dbReference type="ChEBI" id="CHEBI:15378"/>
        <dbReference type="ChEBI" id="CHEBI:57856"/>
        <dbReference type="ChEBI" id="CHEBI:59789"/>
        <dbReference type="ChEBI" id="CHEBI:65315"/>
        <dbReference type="ChEBI" id="CHEBI:74447"/>
        <dbReference type="EC" id="2.1.1.35"/>
    </reaction>
</comment>
<comment type="catalytic activity">
    <reaction evidence="1">
        <text>uridine(341) in tmRNA + S-adenosyl-L-methionine = 5-methyluridine(341) in tmRNA + S-adenosyl-L-homocysteine + H(+)</text>
        <dbReference type="Rhea" id="RHEA:43612"/>
        <dbReference type="Rhea" id="RHEA-COMP:10630"/>
        <dbReference type="Rhea" id="RHEA-COMP:10631"/>
        <dbReference type="ChEBI" id="CHEBI:15378"/>
        <dbReference type="ChEBI" id="CHEBI:57856"/>
        <dbReference type="ChEBI" id="CHEBI:59789"/>
        <dbReference type="ChEBI" id="CHEBI:65315"/>
        <dbReference type="ChEBI" id="CHEBI:74447"/>
    </reaction>
</comment>
<comment type="similarity">
    <text evidence="1">Belongs to the class I-like SAM-binding methyltransferase superfamily. RNA M5U methyltransferase family. TrmA subfamily.</text>
</comment>
<proteinExistence type="inferred from homology"/>
<reference key="1">
    <citation type="journal article" date="2007" name="Proc. Natl. Acad. Sci. U.S.A.">
        <title>Deep-sea vent epsilon-proteobacterial genomes provide insights into emergence of pathogens.</title>
        <authorList>
            <person name="Nakagawa S."/>
            <person name="Takaki Y."/>
            <person name="Shimamura S."/>
            <person name="Reysenbach A.-L."/>
            <person name="Takai K."/>
            <person name="Horikoshi K."/>
        </authorList>
    </citation>
    <scope>NUCLEOTIDE SEQUENCE [LARGE SCALE GENOMIC DNA]</scope>
    <source>
        <strain>SB155-2</strain>
    </source>
</reference>
<gene>
    <name evidence="1" type="primary">trmA</name>
    <name type="ordered locus">NIS_0702</name>
</gene>
<name>TRMA_NITSB</name>
<keyword id="KW-0489">Methyltransferase</keyword>
<keyword id="KW-1185">Reference proteome</keyword>
<keyword id="KW-0949">S-adenosyl-L-methionine</keyword>
<keyword id="KW-0808">Transferase</keyword>
<keyword id="KW-0819">tRNA processing</keyword>
<protein>
    <recommendedName>
        <fullName evidence="1">tRNA/tmRNA (uracil-C(5))-methyltransferase</fullName>
        <ecNumber evidence="1">2.1.1.-</ecNumber>
        <ecNumber evidence="1">2.1.1.35</ecNumber>
    </recommendedName>
    <alternativeName>
        <fullName evidence="1">tRNA (uracil(54)-C(5))-methyltransferase</fullName>
    </alternativeName>
    <alternativeName>
        <fullName evidence="1">tRNA(m5U54)-methyltransferase</fullName>
        <shortName evidence="1">RUMT</shortName>
    </alternativeName>
    <alternativeName>
        <fullName evidence="1">tmRNA (uracil(341)-C(5))-methyltransferase</fullName>
    </alternativeName>
</protein>
<sequence>MECKYFGKCGSCSLYEGGYEEQLQKKVHEFEKLFGLEPEIFPSKQSRYRARAEFRYIDGEYAMHRLHEKGLVTIDACEMVLESIYELMSKLRLLINKHEILSNRLYRVDFLSGLSGESLVTMVYHRPIDEAWEKAANEIAKALHIDIVGRSRGKKIVIGKEYITEKLPVFEKEFLFRHYEGSFTQPNPYVNIKMIEWAGRIAKDLQGDLLELYCGAGNFTLPLSRYFEKVLATEVNKSSIKAAKENVALNGIENVEFVRLSSQEVTQALRGVRDFRRLENIDLHSYNFQTVFVDPPRCGLDDDTRELVREFDNIVYISCNPQTLHRDLEELSKTHTVQKVAVFDQFPYTPHLESGVYLTR</sequence>
<dbReference type="EC" id="2.1.1.-" evidence="1"/>
<dbReference type="EC" id="2.1.1.35" evidence="1"/>
<dbReference type="EMBL" id="AP009178">
    <property type="protein sequence ID" value="BAF69816.1"/>
    <property type="molecule type" value="Genomic_DNA"/>
</dbReference>
<dbReference type="RefSeq" id="WP_012082079.1">
    <property type="nucleotide sequence ID" value="NC_009662.1"/>
</dbReference>
<dbReference type="SMR" id="A6Q2V7"/>
<dbReference type="FunCoup" id="A6Q2V7">
    <property type="interactions" value="57"/>
</dbReference>
<dbReference type="STRING" id="387092.NIS_0702"/>
<dbReference type="KEGG" id="nis:NIS_0702"/>
<dbReference type="eggNOG" id="COG2265">
    <property type="taxonomic scope" value="Bacteria"/>
</dbReference>
<dbReference type="HOGENOM" id="CLU_043022_0_0_7"/>
<dbReference type="InParanoid" id="A6Q2V7"/>
<dbReference type="OrthoDB" id="9804590at2"/>
<dbReference type="Proteomes" id="UP000001118">
    <property type="component" value="Chromosome"/>
</dbReference>
<dbReference type="GO" id="GO:0005829">
    <property type="term" value="C:cytosol"/>
    <property type="evidence" value="ECO:0007669"/>
    <property type="project" value="TreeGrafter"/>
</dbReference>
<dbReference type="GO" id="GO:0019843">
    <property type="term" value="F:rRNA binding"/>
    <property type="evidence" value="ECO:0007669"/>
    <property type="project" value="TreeGrafter"/>
</dbReference>
<dbReference type="GO" id="GO:0030697">
    <property type="term" value="F:tRNA (uracil(54)-C5)-methyltransferase activity, S-adenosyl methionine-dependent"/>
    <property type="evidence" value="ECO:0007669"/>
    <property type="project" value="UniProtKB-EC"/>
</dbReference>
<dbReference type="GO" id="GO:0000049">
    <property type="term" value="F:tRNA binding"/>
    <property type="evidence" value="ECO:0007669"/>
    <property type="project" value="TreeGrafter"/>
</dbReference>
<dbReference type="GO" id="GO:0032259">
    <property type="term" value="P:methylation"/>
    <property type="evidence" value="ECO:0007669"/>
    <property type="project" value="UniProtKB-KW"/>
</dbReference>
<dbReference type="GO" id="GO:0009451">
    <property type="term" value="P:RNA modification"/>
    <property type="evidence" value="ECO:0007669"/>
    <property type="project" value="UniProtKB-ARBA"/>
</dbReference>
<dbReference type="GO" id="GO:0008033">
    <property type="term" value="P:tRNA processing"/>
    <property type="evidence" value="ECO:0007669"/>
    <property type="project" value="UniProtKB-KW"/>
</dbReference>
<dbReference type="CDD" id="cd02440">
    <property type="entry name" value="AdoMet_MTases"/>
    <property type="match status" value="1"/>
</dbReference>
<dbReference type="FunFam" id="3.40.50.150:FF:000012">
    <property type="entry name" value="tRNA/tmRNA (uracil-C(5))-methyltransferase"/>
    <property type="match status" value="1"/>
</dbReference>
<dbReference type="Gene3D" id="2.40.50.1070">
    <property type="match status" value="1"/>
</dbReference>
<dbReference type="Gene3D" id="3.40.50.150">
    <property type="entry name" value="Vaccinia Virus protein VP39"/>
    <property type="match status" value="1"/>
</dbReference>
<dbReference type="HAMAP" id="MF_01011">
    <property type="entry name" value="RNA_methyltr_TrmA"/>
    <property type="match status" value="1"/>
</dbReference>
<dbReference type="InterPro" id="IPR030390">
    <property type="entry name" value="MeTrfase_TrmA_AS"/>
</dbReference>
<dbReference type="InterPro" id="IPR030391">
    <property type="entry name" value="MeTrfase_TrmA_CS"/>
</dbReference>
<dbReference type="InterPro" id="IPR029063">
    <property type="entry name" value="SAM-dependent_MTases_sf"/>
</dbReference>
<dbReference type="InterPro" id="IPR011869">
    <property type="entry name" value="TrmA_MeTrfase"/>
</dbReference>
<dbReference type="InterPro" id="IPR010280">
    <property type="entry name" value="U5_MeTrfase_fam"/>
</dbReference>
<dbReference type="NCBIfam" id="TIGR02143">
    <property type="entry name" value="trmA_only"/>
    <property type="match status" value="1"/>
</dbReference>
<dbReference type="PANTHER" id="PTHR47790">
    <property type="entry name" value="TRNA/TMRNA (URACIL-C(5))-METHYLTRANSFERASE"/>
    <property type="match status" value="1"/>
</dbReference>
<dbReference type="PANTHER" id="PTHR47790:SF2">
    <property type="entry name" value="TRNA_TMRNA (URACIL-C(5))-METHYLTRANSFERASE"/>
    <property type="match status" value="1"/>
</dbReference>
<dbReference type="Pfam" id="PF05958">
    <property type="entry name" value="tRNA_U5-meth_tr"/>
    <property type="match status" value="1"/>
</dbReference>
<dbReference type="SUPFAM" id="SSF53335">
    <property type="entry name" value="S-adenosyl-L-methionine-dependent methyltransferases"/>
    <property type="match status" value="1"/>
</dbReference>
<dbReference type="PROSITE" id="PS51687">
    <property type="entry name" value="SAM_MT_RNA_M5U"/>
    <property type="match status" value="1"/>
</dbReference>
<dbReference type="PROSITE" id="PS01230">
    <property type="entry name" value="TRMA_1"/>
    <property type="match status" value="1"/>
</dbReference>
<dbReference type="PROSITE" id="PS01231">
    <property type="entry name" value="TRMA_2"/>
    <property type="match status" value="1"/>
</dbReference>
<organism>
    <name type="scientific">Nitratiruptor sp. (strain SB155-2)</name>
    <dbReference type="NCBI Taxonomy" id="387092"/>
    <lineage>
        <taxon>Bacteria</taxon>
        <taxon>Pseudomonadati</taxon>
        <taxon>Campylobacterota</taxon>
        <taxon>Epsilonproteobacteria</taxon>
        <taxon>Nautiliales</taxon>
        <taxon>Nitratiruptoraceae</taxon>
        <taxon>Nitratiruptor</taxon>
    </lineage>
</organism>
<feature type="chain" id="PRO_0000388561" description="tRNA/tmRNA (uracil-C(5))-methyltransferase">
    <location>
        <begin position="1"/>
        <end position="360"/>
    </location>
</feature>
<feature type="active site" description="Nucleophile" evidence="1">
    <location>
        <position position="319"/>
    </location>
</feature>
<feature type="active site" description="Proton acceptor" evidence="1">
    <location>
        <position position="353"/>
    </location>
</feature>
<feature type="binding site" evidence="1">
    <location>
        <position position="185"/>
    </location>
    <ligand>
        <name>S-adenosyl-L-methionine</name>
        <dbReference type="ChEBI" id="CHEBI:59789"/>
    </ligand>
</feature>
<feature type="binding site" evidence="1">
    <location>
        <position position="213"/>
    </location>
    <ligand>
        <name>S-adenosyl-L-methionine</name>
        <dbReference type="ChEBI" id="CHEBI:59789"/>
    </ligand>
</feature>
<feature type="binding site" evidence="1">
    <location>
        <position position="218"/>
    </location>
    <ligand>
        <name>S-adenosyl-L-methionine</name>
        <dbReference type="ChEBI" id="CHEBI:59789"/>
    </ligand>
</feature>
<feature type="binding site" evidence="1">
    <location>
        <position position="234"/>
    </location>
    <ligand>
        <name>S-adenosyl-L-methionine</name>
        <dbReference type="ChEBI" id="CHEBI:59789"/>
    </ligand>
</feature>
<feature type="binding site" evidence="1">
    <location>
        <position position="294"/>
    </location>
    <ligand>
        <name>S-adenosyl-L-methionine</name>
        <dbReference type="ChEBI" id="CHEBI:59789"/>
    </ligand>
</feature>
<accession>A6Q2V7</accession>
<evidence type="ECO:0000255" key="1">
    <source>
        <dbReference type="HAMAP-Rule" id="MF_01011"/>
    </source>
</evidence>